<protein>
    <recommendedName>
        <fullName evidence="1">Large ribosomal subunit protein uL1</fullName>
    </recommendedName>
    <alternativeName>
        <fullName evidence="2">50S ribosomal protein L1</fullName>
    </alternativeName>
</protein>
<sequence length="230" mass="24524">MAKKKSKKYLEAAKQVEEGKLYNASEAFGLVKKIDFANFDATIEVAFNLNVDTKQADQQLRGAMVLPNGTGKDQTVVVFAKGAKAQEAKDAGADVVGDDDLVARIQDGWLDFDVAIATPDMMAQVGRLGRVLGPKGLMPNPKTGTVTMDVTKAVTDAKSGQVTYRTDRDGNVHVPLGKVSFTEEALEGNFKAVYDVIAKARPASVKGVYIKHVSVASTFGPSVTLDTTAL</sequence>
<reference key="1">
    <citation type="journal article" date="2006" name="Proc. Natl. Acad. Sci. U.S.A.">
        <title>Multireplicon genome architecture of Lactobacillus salivarius.</title>
        <authorList>
            <person name="Claesson M.J."/>
            <person name="Li Y."/>
            <person name="Leahy S."/>
            <person name="Canchaya C."/>
            <person name="van Pijkeren J.P."/>
            <person name="Cerdeno-Tarraga A.M."/>
            <person name="Parkhill J."/>
            <person name="Flynn S."/>
            <person name="O'Sullivan G.C."/>
            <person name="Collins J.K."/>
            <person name="Higgins D."/>
            <person name="Shanahan F."/>
            <person name="Fitzgerald G.F."/>
            <person name="van Sinderen D."/>
            <person name="O'Toole P.W."/>
        </authorList>
    </citation>
    <scope>NUCLEOTIDE SEQUENCE [LARGE SCALE GENOMIC DNA]</scope>
    <source>
        <strain>UCC118</strain>
    </source>
</reference>
<accession>Q1WST3</accession>
<evidence type="ECO:0000255" key="1">
    <source>
        <dbReference type="HAMAP-Rule" id="MF_01318"/>
    </source>
</evidence>
<evidence type="ECO:0000305" key="2"/>
<dbReference type="EMBL" id="CP000233">
    <property type="protein sequence ID" value="ABE00046.1"/>
    <property type="molecule type" value="Genomic_DNA"/>
</dbReference>
<dbReference type="RefSeq" id="WP_003700678.1">
    <property type="nucleotide sequence ID" value="NC_007929.1"/>
</dbReference>
<dbReference type="RefSeq" id="YP_536129.1">
    <property type="nucleotide sequence ID" value="NC_007929.1"/>
</dbReference>
<dbReference type="SMR" id="Q1WST3"/>
<dbReference type="STRING" id="362948.LSL_1239"/>
<dbReference type="GeneID" id="89465968"/>
<dbReference type="KEGG" id="lsl:LSL_1239"/>
<dbReference type="PATRIC" id="fig|362948.14.peg.1313"/>
<dbReference type="HOGENOM" id="CLU_062853_0_0_9"/>
<dbReference type="OrthoDB" id="9803740at2"/>
<dbReference type="Proteomes" id="UP000006559">
    <property type="component" value="Chromosome"/>
</dbReference>
<dbReference type="GO" id="GO:0015934">
    <property type="term" value="C:large ribosomal subunit"/>
    <property type="evidence" value="ECO:0007669"/>
    <property type="project" value="InterPro"/>
</dbReference>
<dbReference type="GO" id="GO:0019843">
    <property type="term" value="F:rRNA binding"/>
    <property type="evidence" value="ECO:0007669"/>
    <property type="project" value="UniProtKB-UniRule"/>
</dbReference>
<dbReference type="GO" id="GO:0003735">
    <property type="term" value="F:structural constituent of ribosome"/>
    <property type="evidence" value="ECO:0007669"/>
    <property type="project" value="InterPro"/>
</dbReference>
<dbReference type="GO" id="GO:0000049">
    <property type="term" value="F:tRNA binding"/>
    <property type="evidence" value="ECO:0007669"/>
    <property type="project" value="UniProtKB-KW"/>
</dbReference>
<dbReference type="GO" id="GO:0006417">
    <property type="term" value="P:regulation of translation"/>
    <property type="evidence" value="ECO:0007669"/>
    <property type="project" value="UniProtKB-KW"/>
</dbReference>
<dbReference type="GO" id="GO:0006412">
    <property type="term" value="P:translation"/>
    <property type="evidence" value="ECO:0007669"/>
    <property type="project" value="UniProtKB-UniRule"/>
</dbReference>
<dbReference type="CDD" id="cd00403">
    <property type="entry name" value="Ribosomal_L1"/>
    <property type="match status" value="1"/>
</dbReference>
<dbReference type="FunFam" id="3.40.50.790:FF:000001">
    <property type="entry name" value="50S ribosomal protein L1"/>
    <property type="match status" value="1"/>
</dbReference>
<dbReference type="Gene3D" id="3.30.190.20">
    <property type="match status" value="1"/>
</dbReference>
<dbReference type="Gene3D" id="3.40.50.790">
    <property type="match status" value="1"/>
</dbReference>
<dbReference type="HAMAP" id="MF_01318_B">
    <property type="entry name" value="Ribosomal_uL1_B"/>
    <property type="match status" value="1"/>
</dbReference>
<dbReference type="InterPro" id="IPR005878">
    <property type="entry name" value="Ribosom_uL1_bac-type"/>
</dbReference>
<dbReference type="InterPro" id="IPR002143">
    <property type="entry name" value="Ribosomal_uL1"/>
</dbReference>
<dbReference type="InterPro" id="IPR023674">
    <property type="entry name" value="Ribosomal_uL1-like"/>
</dbReference>
<dbReference type="InterPro" id="IPR028364">
    <property type="entry name" value="Ribosomal_uL1/biogenesis"/>
</dbReference>
<dbReference type="InterPro" id="IPR016095">
    <property type="entry name" value="Ribosomal_uL1_3-a/b-sand"/>
</dbReference>
<dbReference type="InterPro" id="IPR023673">
    <property type="entry name" value="Ribosomal_uL1_CS"/>
</dbReference>
<dbReference type="NCBIfam" id="TIGR01169">
    <property type="entry name" value="rplA_bact"/>
    <property type="match status" value="1"/>
</dbReference>
<dbReference type="PANTHER" id="PTHR36427">
    <property type="entry name" value="54S RIBOSOMAL PROTEIN L1, MITOCHONDRIAL"/>
    <property type="match status" value="1"/>
</dbReference>
<dbReference type="PANTHER" id="PTHR36427:SF3">
    <property type="entry name" value="LARGE RIBOSOMAL SUBUNIT PROTEIN UL1M"/>
    <property type="match status" value="1"/>
</dbReference>
<dbReference type="Pfam" id="PF00687">
    <property type="entry name" value="Ribosomal_L1"/>
    <property type="match status" value="1"/>
</dbReference>
<dbReference type="PIRSF" id="PIRSF002155">
    <property type="entry name" value="Ribosomal_L1"/>
    <property type="match status" value="1"/>
</dbReference>
<dbReference type="SUPFAM" id="SSF56808">
    <property type="entry name" value="Ribosomal protein L1"/>
    <property type="match status" value="1"/>
</dbReference>
<dbReference type="PROSITE" id="PS01199">
    <property type="entry name" value="RIBOSOMAL_L1"/>
    <property type="match status" value="1"/>
</dbReference>
<gene>
    <name evidence="1" type="primary">rplA</name>
    <name type="ordered locus">LSL_1239</name>
</gene>
<name>RL1_LIGS1</name>
<keyword id="KW-1185">Reference proteome</keyword>
<keyword id="KW-0678">Repressor</keyword>
<keyword id="KW-0687">Ribonucleoprotein</keyword>
<keyword id="KW-0689">Ribosomal protein</keyword>
<keyword id="KW-0694">RNA-binding</keyword>
<keyword id="KW-0699">rRNA-binding</keyword>
<keyword id="KW-0810">Translation regulation</keyword>
<keyword id="KW-0820">tRNA-binding</keyword>
<organism>
    <name type="scientific">Ligilactobacillus salivarius (strain UCC118)</name>
    <name type="common">Lactobacillus salivarius</name>
    <dbReference type="NCBI Taxonomy" id="362948"/>
    <lineage>
        <taxon>Bacteria</taxon>
        <taxon>Bacillati</taxon>
        <taxon>Bacillota</taxon>
        <taxon>Bacilli</taxon>
        <taxon>Lactobacillales</taxon>
        <taxon>Lactobacillaceae</taxon>
        <taxon>Ligilactobacillus</taxon>
    </lineage>
</organism>
<comment type="function">
    <text evidence="1">Binds directly to 23S rRNA. The L1 stalk is quite mobile in the ribosome, and is involved in E site tRNA release.</text>
</comment>
<comment type="function">
    <text evidence="1">Protein L1 is also a translational repressor protein, it controls the translation of the L11 operon by binding to its mRNA.</text>
</comment>
<comment type="subunit">
    <text evidence="1">Part of the 50S ribosomal subunit.</text>
</comment>
<comment type="similarity">
    <text evidence="1">Belongs to the universal ribosomal protein uL1 family.</text>
</comment>
<proteinExistence type="inferred from homology"/>
<feature type="chain" id="PRO_0000308032" description="Large ribosomal subunit protein uL1">
    <location>
        <begin position="1"/>
        <end position="230"/>
    </location>
</feature>